<feature type="chain" id="PRO_0000116568" description="Efficient mitochondria targeting-associated protein 19">
    <location>
        <begin position="1"/>
        <end position="183"/>
    </location>
</feature>
<feature type="topological domain" description="Cytoplasmic" evidence="1">
    <location>
        <begin position="1"/>
        <end position="25"/>
    </location>
</feature>
<feature type="transmembrane region" description="Helical" evidence="2">
    <location>
        <begin position="26"/>
        <end position="46"/>
    </location>
</feature>
<feature type="topological domain" description="Lumenal" evidence="1">
    <location>
        <begin position="47"/>
        <end position="81"/>
    </location>
</feature>
<feature type="transmembrane region" description="Helical" evidence="2">
    <location>
        <begin position="82"/>
        <end position="102"/>
    </location>
</feature>
<feature type="topological domain" description="Cytoplasmic" evidence="1">
    <location>
        <begin position="103"/>
        <end position="110"/>
    </location>
</feature>
<feature type="transmembrane region" description="Helical" evidence="2">
    <location>
        <begin position="111"/>
        <end position="131"/>
    </location>
</feature>
<feature type="topological domain" description="Lumenal" evidence="1">
    <location>
        <begin position="132"/>
        <end position="138"/>
    </location>
</feature>
<feature type="transmembrane region" description="Helical" evidence="2">
    <location>
        <begin position="139"/>
        <end position="159"/>
    </location>
</feature>
<feature type="topological domain" description="Cytoplasmic" evidence="1">
    <location>
        <begin position="160"/>
        <end position="183"/>
    </location>
</feature>
<feature type="domain" description="EXPERA" evidence="3">
    <location>
        <begin position="24"/>
        <end position="156"/>
    </location>
</feature>
<protein>
    <recommendedName>
        <fullName>Efficient mitochondria targeting-associated protein 19</fullName>
    </recommendedName>
</protein>
<gene>
    <name type="primary">ema19</name>
    <name type="ORF">SPAC56F8.07</name>
</gene>
<name>EMA19_SCHPO</name>
<keyword id="KW-0256">Endoplasmic reticulum</keyword>
<keyword id="KW-0472">Membrane</keyword>
<keyword id="KW-1185">Reference proteome</keyword>
<keyword id="KW-0812">Transmembrane</keyword>
<keyword id="KW-1133">Transmembrane helix</keyword>
<accession>Q10255</accession>
<organism>
    <name type="scientific">Schizosaccharomyces pombe (strain 972 / ATCC 24843)</name>
    <name type="common">Fission yeast</name>
    <dbReference type="NCBI Taxonomy" id="284812"/>
    <lineage>
        <taxon>Eukaryota</taxon>
        <taxon>Fungi</taxon>
        <taxon>Dikarya</taxon>
        <taxon>Ascomycota</taxon>
        <taxon>Taphrinomycotina</taxon>
        <taxon>Schizosaccharomycetes</taxon>
        <taxon>Schizosaccharomycetales</taxon>
        <taxon>Schizosaccharomycetaceae</taxon>
        <taxon>Schizosaccharomyces</taxon>
    </lineage>
</organism>
<dbReference type="EMBL" id="CU329670">
    <property type="protein sequence ID" value="CAA93578.3"/>
    <property type="molecule type" value="Genomic_DNA"/>
</dbReference>
<dbReference type="PIR" id="T38917">
    <property type="entry name" value="T38917"/>
</dbReference>
<dbReference type="RefSeq" id="NP_593222.2">
    <property type="nucleotide sequence ID" value="NM_001018618.1"/>
</dbReference>
<dbReference type="SMR" id="Q10255"/>
<dbReference type="BioGRID" id="279653">
    <property type="interactions" value="6"/>
</dbReference>
<dbReference type="FunCoup" id="Q10255">
    <property type="interactions" value="156"/>
</dbReference>
<dbReference type="STRING" id="284812.Q10255"/>
<dbReference type="MEROPS" id="A28.A06"/>
<dbReference type="iPTMnet" id="Q10255"/>
<dbReference type="PaxDb" id="4896-SPAC56F8.07.1"/>
<dbReference type="EnsemblFungi" id="SPAC56F8.07.1">
    <property type="protein sequence ID" value="SPAC56F8.07.1:pep"/>
    <property type="gene ID" value="SPAC56F8.07"/>
</dbReference>
<dbReference type="GeneID" id="2543225"/>
<dbReference type="KEGG" id="spo:2543225"/>
<dbReference type="PomBase" id="SPAC56F8.07">
    <property type="gene designation" value="ema19"/>
</dbReference>
<dbReference type="VEuPathDB" id="FungiDB:SPAC56F8.07"/>
<dbReference type="eggNOG" id="KOG0012">
    <property type="taxonomic scope" value="Eukaryota"/>
</dbReference>
<dbReference type="HOGENOM" id="CLU_1475958_0_0_1"/>
<dbReference type="InParanoid" id="Q10255"/>
<dbReference type="OMA" id="IAMELFY"/>
<dbReference type="PRO" id="PR:Q10255"/>
<dbReference type="Proteomes" id="UP000002485">
    <property type="component" value="Chromosome I"/>
</dbReference>
<dbReference type="GO" id="GO:0005783">
    <property type="term" value="C:endoplasmic reticulum"/>
    <property type="evidence" value="ECO:0007005"/>
    <property type="project" value="PomBase"/>
</dbReference>
<dbReference type="GO" id="GO:0005789">
    <property type="term" value="C:endoplasmic reticulum membrane"/>
    <property type="evidence" value="ECO:0000250"/>
    <property type="project" value="PomBase"/>
</dbReference>
<dbReference type="GO" id="GO:0006626">
    <property type="term" value="P:protein targeting to mitochondrion"/>
    <property type="evidence" value="ECO:0000266"/>
    <property type="project" value="PomBase"/>
</dbReference>
<dbReference type="InterPro" id="IPR033118">
    <property type="entry name" value="EXPERA"/>
</dbReference>
<dbReference type="InterPro" id="IPR051987">
    <property type="entry name" value="Sigma-2_receptor-like"/>
</dbReference>
<dbReference type="InterPro" id="IPR016964">
    <property type="entry name" value="Sigma2_recept"/>
</dbReference>
<dbReference type="PANTHER" id="PTHR31204">
    <property type="entry name" value="SIGMA INTRACELLULAR RECEPTOR 2"/>
    <property type="match status" value="1"/>
</dbReference>
<dbReference type="PANTHER" id="PTHR31204:SF1">
    <property type="entry name" value="SIGMA INTRACELLULAR RECEPTOR 2"/>
    <property type="match status" value="1"/>
</dbReference>
<dbReference type="Pfam" id="PF05241">
    <property type="entry name" value="EBP"/>
    <property type="match status" value="1"/>
</dbReference>
<dbReference type="PIRSF" id="PIRSF031032">
    <property type="entry name" value="TMP_97_prd"/>
    <property type="match status" value="1"/>
</dbReference>
<dbReference type="PROSITE" id="PS51751">
    <property type="entry name" value="EXPERA"/>
    <property type="match status" value="1"/>
</dbReference>
<proteinExistence type="inferred from homology"/>
<reference key="1">
    <citation type="journal article" date="2002" name="Nature">
        <title>The genome sequence of Schizosaccharomyces pombe.</title>
        <authorList>
            <person name="Wood V."/>
            <person name="Gwilliam R."/>
            <person name="Rajandream M.A."/>
            <person name="Lyne M.H."/>
            <person name="Lyne R."/>
            <person name="Stewart A."/>
            <person name="Sgouros J.G."/>
            <person name="Peat N."/>
            <person name="Hayles J."/>
            <person name="Baker S.G."/>
            <person name="Basham D."/>
            <person name="Bowman S."/>
            <person name="Brooks K."/>
            <person name="Brown D."/>
            <person name="Brown S."/>
            <person name="Chillingworth T."/>
            <person name="Churcher C.M."/>
            <person name="Collins M."/>
            <person name="Connor R."/>
            <person name="Cronin A."/>
            <person name="Davis P."/>
            <person name="Feltwell T."/>
            <person name="Fraser A."/>
            <person name="Gentles S."/>
            <person name="Goble A."/>
            <person name="Hamlin N."/>
            <person name="Harris D.E."/>
            <person name="Hidalgo J."/>
            <person name="Hodgson G."/>
            <person name="Holroyd S."/>
            <person name="Hornsby T."/>
            <person name="Howarth S."/>
            <person name="Huckle E.J."/>
            <person name="Hunt S."/>
            <person name="Jagels K."/>
            <person name="James K.D."/>
            <person name="Jones L."/>
            <person name="Jones M."/>
            <person name="Leather S."/>
            <person name="McDonald S."/>
            <person name="McLean J."/>
            <person name="Mooney P."/>
            <person name="Moule S."/>
            <person name="Mungall K.L."/>
            <person name="Murphy L.D."/>
            <person name="Niblett D."/>
            <person name="Odell C."/>
            <person name="Oliver K."/>
            <person name="O'Neil S."/>
            <person name="Pearson D."/>
            <person name="Quail M.A."/>
            <person name="Rabbinowitsch E."/>
            <person name="Rutherford K.M."/>
            <person name="Rutter S."/>
            <person name="Saunders D."/>
            <person name="Seeger K."/>
            <person name="Sharp S."/>
            <person name="Skelton J."/>
            <person name="Simmonds M.N."/>
            <person name="Squares R."/>
            <person name="Squares S."/>
            <person name="Stevens K."/>
            <person name="Taylor K."/>
            <person name="Taylor R.G."/>
            <person name="Tivey A."/>
            <person name="Walsh S.V."/>
            <person name="Warren T."/>
            <person name="Whitehead S."/>
            <person name="Woodward J.R."/>
            <person name="Volckaert G."/>
            <person name="Aert R."/>
            <person name="Robben J."/>
            <person name="Grymonprez B."/>
            <person name="Weltjens I."/>
            <person name="Vanstreels E."/>
            <person name="Rieger M."/>
            <person name="Schaefer M."/>
            <person name="Mueller-Auer S."/>
            <person name="Gabel C."/>
            <person name="Fuchs M."/>
            <person name="Duesterhoeft A."/>
            <person name="Fritzc C."/>
            <person name="Holzer E."/>
            <person name="Moestl D."/>
            <person name="Hilbert H."/>
            <person name="Borzym K."/>
            <person name="Langer I."/>
            <person name="Beck A."/>
            <person name="Lehrach H."/>
            <person name="Reinhardt R."/>
            <person name="Pohl T.M."/>
            <person name="Eger P."/>
            <person name="Zimmermann W."/>
            <person name="Wedler H."/>
            <person name="Wambutt R."/>
            <person name="Purnelle B."/>
            <person name="Goffeau A."/>
            <person name="Cadieu E."/>
            <person name="Dreano S."/>
            <person name="Gloux S."/>
            <person name="Lelaure V."/>
            <person name="Mottier S."/>
            <person name="Galibert F."/>
            <person name="Aves S.J."/>
            <person name="Xiang Z."/>
            <person name="Hunt C."/>
            <person name="Moore K."/>
            <person name="Hurst S.M."/>
            <person name="Lucas M."/>
            <person name="Rochet M."/>
            <person name="Gaillardin C."/>
            <person name="Tallada V.A."/>
            <person name="Garzon A."/>
            <person name="Thode G."/>
            <person name="Daga R.R."/>
            <person name="Cruzado L."/>
            <person name="Jimenez J."/>
            <person name="Sanchez M."/>
            <person name="del Rey F."/>
            <person name="Benito J."/>
            <person name="Dominguez A."/>
            <person name="Revuelta J.L."/>
            <person name="Moreno S."/>
            <person name="Armstrong J."/>
            <person name="Forsburg S.L."/>
            <person name="Cerutti L."/>
            <person name="Lowe T."/>
            <person name="McCombie W.R."/>
            <person name="Paulsen I."/>
            <person name="Potashkin J."/>
            <person name="Shpakovski G.V."/>
            <person name="Ussery D."/>
            <person name="Barrell B.G."/>
            <person name="Nurse P."/>
        </authorList>
    </citation>
    <scope>NUCLEOTIDE SEQUENCE [LARGE SCALE GENOMIC DNA]</scope>
    <source>
        <strain>972 / ATCC 24843</strain>
    </source>
</reference>
<reference key="2">
    <citation type="journal article" date="2006" name="Nat. Biotechnol.">
        <title>ORFeome cloning and global analysis of protein localization in the fission yeast Schizosaccharomyces pombe.</title>
        <authorList>
            <person name="Matsuyama A."/>
            <person name="Arai R."/>
            <person name="Yashiroda Y."/>
            <person name="Shirai A."/>
            <person name="Kamata A."/>
            <person name="Sekido S."/>
            <person name="Kobayashi Y."/>
            <person name="Hashimoto A."/>
            <person name="Hamamoto M."/>
            <person name="Hiraoka Y."/>
            <person name="Horinouchi S."/>
            <person name="Yoshida M."/>
        </authorList>
    </citation>
    <scope>SUBCELLULAR LOCATION [LARGE SCALE ANALYSIS]</scope>
</reference>
<evidence type="ECO:0000250" key="1">
    <source>
        <dbReference type="UniProtKB" id="Q12155"/>
    </source>
</evidence>
<evidence type="ECO:0000255" key="2"/>
<evidence type="ECO:0000255" key="3">
    <source>
        <dbReference type="PROSITE-ProRule" id="PRU01087"/>
    </source>
</evidence>
<evidence type="ECO:0000269" key="4">
    <source>
    </source>
</evidence>
<evidence type="ECO:0000305" key="5"/>
<comment type="function">
    <text evidence="1">Part of an import route for newly synthesized mitochondrial proteins termed the ER-SURF pathway (ER surface-mediated protein targeting), which retrieves mitochondrial precursor proteins from the ER surface and reroutes them to mitochondria for efficient mitochondrial import. Acts as a quality control factor in the ER, promoting the proteolytic degradation of nonproductive and extramitochondrial precursor proteins in the ER membrane thus removing them from the ER surface.</text>
</comment>
<comment type="subcellular location">
    <subcellularLocation>
        <location evidence="4">Endoplasmic reticulum membrane</location>
        <topology evidence="2">Multi-pass membrane protein</topology>
    </subcellularLocation>
</comment>
<comment type="similarity">
    <text evidence="5">Belongs to the TMEM97/sigma-2 receptor family.</text>
</comment>
<sequence>MKVVSLRRIYSSEIYKLPTTRLHMDTLYYYYFVSHLAAALFVDLPITEWLGGSLSCLSGLRRFYLSTYEDPILLIPAPWKTALFSSELFFQVPFFIWVSLRLRKKARDPVLWVAILIYGVHAFTTTWCCMFELFAEKKWMIMSFYFPYLAIPLWMAIDMGGRLVKSCHAAKSGPSSTITSKSD</sequence>